<feature type="chain" id="PRO_0000060226" description="Ribose import permease protein RbsC">
    <location>
        <begin position="1"/>
        <end position="323"/>
    </location>
</feature>
<feature type="transmembrane region" description="Helical" evidence="2">
    <location>
        <begin position="21"/>
        <end position="41"/>
    </location>
</feature>
<feature type="transmembrane region" description="Helical" evidence="2">
    <location>
        <begin position="55"/>
        <end position="75"/>
    </location>
</feature>
<feature type="transmembrane region" description="Helical" evidence="2">
    <location>
        <begin position="95"/>
        <end position="115"/>
    </location>
</feature>
<feature type="transmembrane region" description="Helical" evidence="2">
    <location>
        <begin position="122"/>
        <end position="142"/>
    </location>
</feature>
<feature type="transmembrane region" description="Helical" evidence="2">
    <location>
        <begin position="167"/>
        <end position="187"/>
    </location>
</feature>
<feature type="transmembrane region" description="Helical" evidence="2">
    <location>
        <begin position="217"/>
        <end position="237"/>
    </location>
</feature>
<feature type="transmembrane region" description="Helical" evidence="2">
    <location>
        <begin position="273"/>
        <end position="293"/>
    </location>
</feature>
<dbReference type="EMBL" id="L42023">
    <property type="protein sequence ID" value="AAC22161.1"/>
    <property type="molecule type" value="Genomic_DNA"/>
</dbReference>
<dbReference type="PIR" id="I64072">
    <property type="entry name" value="I64072"/>
</dbReference>
<dbReference type="RefSeq" id="NP_438661.1">
    <property type="nucleotide sequence ID" value="NC_000907.1"/>
</dbReference>
<dbReference type="STRING" id="71421.HI_0503"/>
<dbReference type="EnsemblBacteria" id="AAC22161">
    <property type="protein sequence ID" value="AAC22161"/>
    <property type="gene ID" value="HI_0503"/>
</dbReference>
<dbReference type="KEGG" id="hin:HI_0503"/>
<dbReference type="PATRIC" id="fig|71421.8.peg.522"/>
<dbReference type="eggNOG" id="COG1172">
    <property type="taxonomic scope" value="Bacteria"/>
</dbReference>
<dbReference type="HOGENOM" id="CLU_028880_2_2_6"/>
<dbReference type="OrthoDB" id="8843934at2"/>
<dbReference type="PhylomeDB" id="P44736"/>
<dbReference type="BioCyc" id="HINF71421:G1GJ1-516-MONOMER"/>
<dbReference type="Proteomes" id="UP000000579">
    <property type="component" value="Chromosome"/>
</dbReference>
<dbReference type="GO" id="GO:0005886">
    <property type="term" value="C:plasma membrane"/>
    <property type="evidence" value="ECO:0000318"/>
    <property type="project" value="GO_Central"/>
</dbReference>
<dbReference type="GO" id="GO:0022857">
    <property type="term" value="F:transmembrane transporter activity"/>
    <property type="evidence" value="ECO:0007669"/>
    <property type="project" value="InterPro"/>
</dbReference>
<dbReference type="CDD" id="cd06579">
    <property type="entry name" value="TM_PBP1_transp_AraH_like"/>
    <property type="match status" value="1"/>
</dbReference>
<dbReference type="InterPro" id="IPR001851">
    <property type="entry name" value="ABC_transp_permease"/>
</dbReference>
<dbReference type="NCBIfam" id="NF007067">
    <property type="entry name" value="PRK09512.1"/>
    <property type="match status" value="1"/>
</dbReference>
<dbReference type="PANTHER" id="PTHR32196:SF21">
    <property type="entry name" value="ABC TRANSPORTER PERMEASE PROTEIN YPHD-RELATED"/>
    <property type="match status" value="1"/>
</dbReference>
<dbReference type="PANTHER" id="PTHR32196">
    <property type="entry name" value="ABC TRANSPORTER PERMEASE PROTEIN YPHD-RELATED-RELATED"/>
    <property type="match status" value="1"/>
</dbReference>
<dbReference type="Pfam" id="PF02653">
    <property type="entry name" value="BPD_transp_2"/>
    <property type="match status" value="1"/>
</dbReference>
<evidence type="ECO:0000250" key="1">
    <source>
        <dbReference type="UniProtKB" id="P0AGI1"/>
    </source>
</evidence>
<evidence type="ECO:0000255" key="2"/>
<evidence type="ECO:0000305" key="3"/>
<sequence>MMKNETSNFQIGRFLIEQRSFIALIILIAIVSMINPDFFSVDNILNILRQTSVNAIIAVGMTFVILIAGIDLSVGSVLALTGAIAASMVSIELPIFLVIPVVLLIGTLLGGISGVIVAKGKVQAFIATLVTMTLLRGITMVYTDGRPITTGFSDNADLFASIGTGYVLGIPVPIWIMSIVFAVAWYILKDTPIGRYIYALGGNEAATQLSGINVNKIKVFVFAVSGFLSALAGLIVTSRLSSAQPTAGVSYELDAIAAVVVGGTSLMGGKGRVMGTLIGALIIGFLNNALNLLDISSYYQMIAKALVILVAVLADNYLGTKKL</sequence>
<proteinExistence type="inferred from homology"/>
<accession>P44736</accession>
<reference key="1">
    <citation type="journal article" date="1995" name="Science">
        <title>Whole-genome random sequencing and assembly of Haemophilus influenzae Rd.</title>
        <authorList>
            <person name="Fleischmann R.D."/>
            <person name="Adams M.D."/>
            <person name="White O."/>
            <person name="Clayton R.A."/>
            <person name="Kirkness E.F."/>
            <person name="Kerlavage A.R."/>
            <person name="Bult C.J."/>
            <person name="Tomb J.-F."/>
            <person name="Dougherty B.A."/>
            <person name="Merrick J.M."/>
            <person name="McKenney K."/>
            <person name="Sutton G.G."/>
            <person name="FitzHugh W."/>
            <person name="Fields C.A."/>
            <person name="Gocayne J.D."/>
            <person name="Scott J.D."/>
            <person name="Shirley R."/>
            <person name="Liu L.-I."/>
            <person name="Glodek A."/>
            <person name="Kelley J.M."/>
            <person name="Weidman J.F."/>
            <person name="Phillips C.A."/>
            <person name="Spriggs T."/>
            <person name="Hedblom E."/>
            <person name="Cotton M.D."/>
            <person name="Utterback T.R."/>
            <person name="Hanna M.C."/>
            <person name="Nguyen D.T."/>
            <person name="Saudek D.M."/>
            <person name="Brandon R.C."/>
            <person name="Fine L.D."/>
            <person name="Fritchman J.L."/>
            <person name="Fuhrmann J.L."/>
            <person name="Geoghagen N.S.M."/>
            <person name="Gnehm C.L."/>
            <person name="McDonald L.A."/>
            <person name="Small K.V."/>
            <person name="Fraser C.M."/>
            <person name="Smith H.O."/>
            <person name="Venter J.C."/>
        </authorList>
    </citation>
    <scope>NUCLEOTIDE SEQUENCE [LARGE SCALE GENOMIC DNA]</scope>
    <source>
        <strain>ATCC 51907 / DSM 11121 / KW20 / Rd</strain>
    </source>
</reference>
<comment type="function">
    <text evidence="1">Part of the ABC transporter complex RbsABC involved in ribose import. Probably responsible for the translocation of the substrate across the membrane.</text>
</comment>
<comment type="subunit">
    <text evidence="1">The complex is composed of an ATP-binding protein (RbsA), two transmembrane proteins (RbsC) and a solute-binding protein (RbsB).</text>
</comment>
<comment type="subcellular location">
    <subcellularLocation>
        <location evidence="1">Cell inner membrane</location>
        <topology evidence="2">Multi-pass membrane protein</topology>
    </subcellularLocation>
</comment>
<comment type="similarity">
    <text evidence="3">Belongs to the binding-protein-dependent transport system permease family. AraH/RbsC subfamily.</text>
</comment>
<organism>
    <name type="scientific">Haemophilus influenzae (strain ATCC 51907 / DSM 11121 / KW20 / Rd)</name>
    <dbReference type="NCBI Taxonomy" id="71421"/>
    <lineage>
        <taxon>Bacteria</taxon>
        <taxon>Pseudomonadati</taxon>
        <taxon>Pseudomonadota</taxon>
        <taxon>Gammaproteobacteria</taxon>
        <taxon>Pasteurellales</taxon>
        <taxon>Pasteurellaceae</taxon>
        <taxon>Haemophilus</taxon>
    </lineage>
</organism>
<name>RBSC_HAEIN</name>
<protein>
    <recommendedName>
        <fullName evidence="1">Ribose import permease protein RbsC</fullName>
    </recommendedName>
</protein>
<keyword id="KW-0997">Cell inner membrane</keyword>
<keyword id="KW-1003">Cell membrane</keyword>
<keyword id="KW-0472">Membrane</keyword>
<keyword id="KW-1185">Reference proteome</keyword>
<keyword id="KW-0762">Sugar transport</keyword>
<keyword id="KW-0812">Transmembrane</keyword>
<keyword id="KW-1133">Transmembrane helix</keyword>
<keyword id="KW-0813">Transport</keyword>
<gene>
    <name type="primary">rbsC</name>
    <name type="ordered locus">HI_0503</name>
</gene>